<gene>
    <name evidence="1" type="primary">ilvC</name>
    <name type="ordered locus">Ppro_2555</name>
</gene>
<proteinExistence type="inferred from homology"/>
<accession>A1AS39</accession>
<evidence type="ECO:0000255" key="1">
    <source>
        <dbReference type="HAMAP-Rule" id="MF_00435"/>
    </source>
</evidence>
<evidence type="ECO:0000255" key="2">
    <source>
        <dbReference type="PROSITE-ProRule" id="PRU01197"/>
    </source>
</evidence>
<evidence type="ECO:0000255" key="3">
    <source>
        <dbReference type="PROSITE-ProRule" id="PRU01198"/>
    </source>
</evidence>
<keyword id="KW-0028">Amino-acid biosynthesis</keyword>
<keyword id="KW-0100">Branched-chain amino acid biosynthesis</keyword>
<keyword id="KW-0460">Magnesium</keyword>
<keyword id="KW-0479">Metal-binding</keyword>
<keyword id="KW-0521">NADP</keyword>
<keyword id="KW-0560">Oxidoreductase</keyword>
<keyword id="KW-1185">Reference proteome</keyword>
<feature type="chain" id="PRO_1000050550" description="Ketol-acid reductoisomerase (NADP(+))">
    <location>
        <begin position="1"/>
        <end position="338"/>
    </location>
</feature>
<feature type="domain" description="KARI N-terminal Rossmann" evidence="2">
    <location>
        <begin position="1"/>
        <end position="181"/>
    </location>
</feature>
<feature type="domain" description="KARI C-terminal knotted" evidence="3">
    <location>
        <begin position="182"/>
        <end position="327"/>
    </location>
</feature>
<feature type="active site" evidence="1">
    <location>
        <position position="107"/>
    </location>
</feature>
<feature type="binding site" evidence="1">
    <location>
        <begin position="24"/>
        <end position="27"/>
    </location>
    <ligand>
        <name>NADP(+)</name>
        <dbReference type="ChEBI" id="CHEBI:58349"/>
    </ligand>
</feature>
<feature type="binding site" evidence="1">
    <location>
        <position position="47"/>
    </location>
    <ligand>
        <name>NADP(+)</name>
        <dbReference type="ChEBI" id="CHEBI:58349"/>
    </ligand>
</feature>
<feature type="binding site" evidence="1">
    <location>
        <position position="50"/>
    </location>
    <ligand>
        <name>NADP(+)</name>
        <dbReference type="ChEBI" id="CHEBI:58349"/>
    </ligand>
</feature>
<feature type="binding site" evidence="1">
    <location>
        <position position="52"/>
    </location>
    <ligand>
        <name>NADP(+)</name>
        <dbReference type="ChEBI" id="CHEBI:58349"/>
    </ligand>
</feature>
<feature type="binding site" evidence="1">
    <location>
        <begin position="82"/>
        <end position="85"/>
    </location>
    <ligand>
        <name>NADP(+)</name>
        <dbReference type="ChEBI" id="CHEBI:58349"/>
    </ligand>
</feature>
<feature type="binding site" evidence="1">
    <location>
        <position position="133"/>
    </location>
    <ligand>
        <name>NADP(+)</name>
        <dbReference type="ChEBI" id="CHEBI:58349"/>
    </ligand>
</feature>
<feature type="binding site" evidence="1">
    <location>
        <position position="190"/>
    </location>
    <ligand>
        <name>Mg(2+)</name>
        <dbReference type="ChEBI" id="CHEBI:18420"/>
        <label>1</label>
    </ligand>
</feature>
<feature type="binding site" evidence="1">
    <location>
        <position position="190"/>
    </location>
    <ligand>
        <name>Mg(2+)</name>
        <dbReference type="ChEBI" id="CHEBI:18420"/>
        <label>2</label>
    </ligand>
</feature>
<feature type="binding site" evidence="1">
    <location>
        <position position="194"/>
    </location>
    <ligand>
        <name>Mg(2+)</name>
        <dbReference type="ChEBI" id="CHEBI:18420"/>
        <label>1</label>
    </ligand>
</feature>
<feature type="binding site" evidence="1">
    <location>
        <position position="226"/>
    </location>
    <ligand>
        <name>Mg(2+)</name>
        <dbReference type="ChEBI" id="CHEBI:18420"/>
        <label>2</label>
    </ligand>
</feature>
<feature type="binding site" evidence="1">
    <location>
        <position position="230"/>
    </location>
    <ligand>
        <name>Mg(2+)</name>
        <dbReference type="ChEBI" id="CHEBI:18420"/>
        <label>2</label>
    </ligand>
</feature>
<feature type="binding site" evidence="1">
    <location>
        <position position="251"/>
    </location>
    <ligand>
        <name>substrate</name>
    </ligand>
</feature>
<sequence length="338" mass="36910">MKVYYDKDCNLAVLKNKTVAIIGYGSQGHAHALNLNDSGIDVIVGLRKESPSVKKATDAGLKVLGVAEAAKAADIVMILLPDETQGDVYRAEIGPNLKEGATIAFGHGFNIHFGQIEPRADINVFMVAPKGPGHMVRHEYTRGGGVPCLVAIHQDPSGKTKEIALAYASAVGGGRSGIIETNFREETETDLFGEQAVLCGGISALIQAGFETLVEAGYAPEMAYFECLHETKLIVDLIYEGGIANMRYSVSNTAEYGDLTRGPRVVNEETKWEMKKILDEIQTGEFCKEWMLENKANKPTFNALRRRGSEHQIEEVGARLRAMMPWIGKNKIVDKAKN</sequence>
<name>ILVC_PELPD</name>
<organism>
    <name type="scientific">Pelobacter propionicus (strain DSM 2379 / NBRC 103807 / OttBd1)</name>
    <dbReference type="NCBI Taxonomy" id="338966"/>
    <lineage>
        <taxon>Bacteria</taxon>
        <taxon>Pseudomonadati</taxon>
        <taxon>Thermodesulfobacteriota</taxon>
        <taxon>Desulfuromonadia</taxon>
        <taxon>Desulfuromonadales</taxon>
        <taxon>Desulfuromonadaceae</taxon>
        <taxon>Pelobacter</taxon>
    </lineage>
</organism>
<protein>
    <recommendedName>
        <fullName evidence="1">Ketol-acid reductoisomerase (NADP(+))</fullName>
        <shortName evidence="1">KARI</shortName>
        <ecNumber evidence="1">1.1.1.86</ecNumber>
    </recommendedName>
    <alternativeName>
        <fullName evidence="1">Acetohydroxy-acid isomeroreductase</fullName>
        <shortName evidence="1">AHIR</shortName>
    </alternativeName>
    <alternativeName>
        <fullName evidence="1">Alpha-keto-beta-hydroxylacyl reductoisomerase</fullName>
    </alternativeName>
    <alternativeName>
        <fullName evidence="1">Ketol-acid reductoisomerase type 1</fullName>
    </alternativeName>
    <alternativeName>
        <fullName evidence="1">Ketol-acid reductoisomerase type I</fullName>
    </alternativeName>
</protein>
<comment type="function">
    <text evidence="1">Involved in the biosynthesis of branched-chain amino acids (BCAA). Catalyzes an alkyl-migration followed by a ketol-acid reduction of (S)-2-acetolactate (S2AL) to yield (R)-2,3-dihydroxy-isovalerate. In the isomerase reaction, S2AL is rearranged via a Mg-dependent methyl migration to produce 3-hydroxy-3-methyl-2-ketobutyrate (HMKB). In the reductase reaction, this 2-ketoacid undergoes a metal-dependent reduction by NADPH to yield (R)-2,3-dihydroxy-isovalerate.</text>
</comment>
<comment type="catalytic activity">
    <reaction evidence="1">
        <text>(2R)-2,3-dihydroxy-3-methylbutanoate + NADP(+) = (2S)-2-acetolactate + NADPH + H(+)</text>
        <dbReference type="Rhea" id="RHEA:22068"/>
        <dbReference type="ChEBI" id="CHEBI:15378"/>
        <dbReference type="ChEBI" id="CHEBI:49072"/>
        <dbReference type="ChEBI" id="CHEBI:57783"/>
        <dbReference type="ChEBI" id="CHEBI:58349"/>
        <dbReference type="ChEBI" id="CHEBI:58476"/>
        <dbReference type="EC" id="1.1.1.86"/>
    </reaction>
</comment>
<comment type="catalytic activity">
    <reaction evidence="1">
        <text>(2R,3R)-2,3-dihydroxy-3-methylpentanoate + NADP(+) = (S)-2-ethyl-2-hydroxy-3-oxobutanoate + NADPH + H(+)</text>
        <dbReference type="Rhea" id="RHEA:13493"/>
        <dbReference type="ChEBI" id="CHEBI:15378"/>
        <dbReference type="ChEBI" id="CHEBI:49256"/>
        <dbReference type="ChEBI" id="CHEBI:49258"/>
        <dbReference type="ChEBI" id="CHEBI:57783"/>
        <dbReference type="ChEBI" id="CHEBI:58349"/>
        <dbReference type="EC" id="1.1.1.86"/>
    </reaction>
</comment>
<comment type="cofactor">
    <cofactor evidence="1">
        <name>Mg(2+)</name>
        <dbReference type="ChEBI" id="CHEBI:18420"/>
    </cofactor>
    <text evidence="1">Binds 2 magnesium ions per subunit.</text>
</comment>
<comment type="pathway">
    <text evidence="1">Amino-acid biosynthesis; L-isoleucine biosynthesis; L-isoleucine from 2-oxobutanoate: step 2/4.</text>
</comment>
<comment type="pathway">
    <text evidence="1">Amino-acid biosynthesis; L-valine biosynthesis; L-valine from pyruvate: step 2/4.</text>
</comment>
<comment type="similarity">
    <text evidence="1">Belongs to the ketol-acid reductoisomerase family.</text>
</comment>
<reference key="1">
    <citation type="submission" date="2006-10" db="EMBL/GenBank/DDBJ databases">
        <title>Complete sequence of chromosome of Pelobacter propionicus DSM 2379.</title>
        <authorList>
            <consortium name="US DOE Joint Genome Institute"/>
            <person name="Copeland A."/>
            <person name="Lucas S."/>
            <person name="Lapidus A."/>
            <person name="Barry K."/>
            <person name="Detter J.C."/>
            <person name="Glavina del Rio T."/>
            <person name="Hammon N."/>
            <person name="Israni S."/>
            <person name="Dalin E."/>
            <person name="Tice H."/>
            <person name="Pitluck S."/>
            <person name="Saunders E."/>
            <person name="Brettin T."/>
            <person name="Bruce D."/>
            <person name="Han C."/>
            <person name="Tapia R."/>
            <person name="Schmutz J."/>
            <person name="Larimer F."/>
            <person name="Land M."/>
            <person name="Hauser L."/>
            <person name="Kyrpides N."/>
            <person name="Kim E."/>
            <person name="Lovley D."/>
            <person name="Richardson P."/>
        </authorList>
    </citation>
    <scope>NUCLEOTIDE SEQUENCE [LARGE SCALE GENOMIC DNA]</scope>
    <source>
        <strain>DSM 2379 / NBRC 103807 / OttBd1</strain>
    </source>
</reference>
<dbReference type="EC" id="1.1.1.86" evidence="1"/>
<dbReference type="EMBL" id="CP000482">
    <property type="protein sequence ID" value="ABL00160.1"/>
    <property type="molecule type" value="Genomic_DNA"/>
</dbReference>
<dbReference type="RefSeq" id="WP_011736414.1">
    <property type="nucleotide sequence ID" value="NC_008609.1"/>
</dbReference>
<dbReference type="SMR" id="A1AS39"/>
<dbReference type="STRING" id="338966.Ppro_2555"/>
<dbReference type="KEGG" id="ppd:Ppro_2555"/>
<dbReference type="eggNOG" id="COG0059">
    <property type="taxonomic scope" value="Bacteria"/>
</dbReference>
<dbReference type="HOGENOM" id="CLU_033821_0_1_7"/>
<dbReference type="OrthoDB" id="9804088at2"/>
<dbReference type="UniPathway" id="UPA00047">
    <property type="reaction ID" value="UER00056"/>
</dbReference>
<dbReference type="UniPathway" id="UPA00049">
    <property type="reaction ID" value="UER00060"/>
</dbReference>
<dbReference type="Proteomes" id="UP000006732">
    <property type="component" value="Chromosome"/>
</dbReference>
<dbReference type="GO" id="GO:0005829">
    <property type="term" value="C:cytosol"/>
    <property type="evidence" value="ECO:0007669"/>
    <property type="project" value="TreeGrafter"/>
</dbReference>
<dbReference type="GO" id="GO:0004455">
    <property type="term" value="F:ketol-acid reductoisomerase activity"/>
    <property type="evidence" value="ECO:0007669"/>
    <property type="project" value="UniProtKB-UniRule"/>
</dbReference>
<dbReference type="GO" id="GO:0000287">
    <property type="term" value="F:magnesium ion binding"/>
    <property type="evidence" value="ECO:0007669"/>
    <property type="project" value="UniProtKB-UniRule"/>
</dbReference>
<dbReference type="GO" id="GO:0050661">
    <property type="term" value="F:NADP binding"/>
    <property type="evidence" value="ECO:0007669"/>
    <property type="project" value="InterPro"/>
</dbReference>
<dbReference type="GO" id="GO:0009097">
    <property type="term" value="P:isoleucine biosynthetic process"/>
    <property type="evidence" value="ECO:0007669"/>
    <property type="project" value="UniProtKB-UniRule"/>
</dbReference>
<dbReference type="GO" id="GO:0009099">
    <property type="term" value="P:L-valine biosynthetic process"/>
    <property type="evidence" value="ECO:0007669"/>
    <property type="project" value="UniProtKB-UniRule"/>
</dbReference>
<dbReference type="FunFam" id="3.40.50.720:FF:000023">
    <property type="entry name" value="Ketol-acid reductoisomerase (NADP(+))"/>
    <property type="match status" value="1"/>
</dbReference>
<dbReference type="Gene3D" id="6.10.240.10">
    <property type="match status" value="1"/>
</dbReference>
<dbReference type="Gene3D" id="3.40.50.720">
    <property type="entry name" value="NAD(P)-binding Rossmann-like Domain"/>
    <property type="match status" value="1"/>
</dbReference>
<dbReference type="HAMAP" id="MF_00435">
    <property type="entry name" value="IlvC"/>
    <property type="match status" value="1"/>
</dbReference>
<dbReference type="InterPro" id="IPR008927">
    <property type="entry name" value="6-PGluconate_DH-like_C_sf"/>
</dbReference>
<dbReference type="InterPro" id="IPR013023">
    <property type="entry name" value="KARI"/>
</dbReference>
<dbReference type="InterPro" id="IPR000506">
    <property type="entry name" value="KARI_C"/>
</dbReference>
<dbReference type="InterPro" id="IPR013116">
    <property type="entry name" value="KARI_N"/>
</dbReference>
<dbReference type="InterPro" id="IPR014359">
    <property type="entry name" value="KARI_prok"/>
</dbReference>
<dbReference type="InterPro" id="IPR036291">
    <property type="entry name" value="NAD(P)-bd_dom_sf"/>
</dbReference>
<dbReference type="NCBIfam" id="TIGR00465">
    <property type="entry name" value="ilvC"/>
    <property type="match status" value="1"/>
</dbReference>
<dbReference type="NCBIfam" id="NF004017">
    <property type="entry name" value="PRK05479.1"/>
    <property type="match status" value="1"/>
</dbReference>
<dbReference type="NCBIfam" id="NF009940">
    <property type="entry name" value="PRK13403.1"/>
    <property type="match status" value="1"/>
</dbReference>
<dbReference type="PANTHER" id="PTHR21371">
    <property type="entry name" value="KETOL-ACID REDUCTOISOMERASE, MITOCHONDRIAL"/>
    <property type="match status" value="1"/>
</dbReference>
<dbReference type="PANTHER" id="PTHR21371:SF1">
    <property type="entry name" value="KETOL-ACID REDUCTOISOMERASE, MITOCHONDRIAL"/>
    <property type="match status" value="1"/>
</dbReference>
<dbReference type="Pfam" id="PF01450">
    <property type="entry name" value="KARI_C"/>
    <property type="match status" value="1"/>
</dbReference>
<dbReference type="Pfam" id="PF07991">
    <property type="entry name" value="KARI_N"/>
    <property type="match status" value="1"/>
</dbReference>
<dbReference type="PIRSF" id="PIRSF000116">
    <property type="entry name" value="IlvC_gammaproteo"/>
    <property type="match status" value="1"/>
</dbReference>
<dbReference type="SUPFAM" id="SSF48179">
    <property type="entry name" value="6-phosphogluconate dehydrogenase C-terminal domain-like"/>
    <property type="match status" value="1"/>
</dbReference>
<dbReference type="SUPFAM" id="SSF51735">
    <property type="entry name" value="NAD(P)-binding Rossmann-fold domains"/>
    <property type="match status" value="1"/>
</dbReference>
<dbReference type="PROSITE" id="PS51851">
    <property type="entry name" value="KARI_C"/>
    <property type="match status" value="1"/>
</dbReference>
<dbReference type="PROSITE" id="PS51850">
    <property type="entry name" value="KARI_N"/>
    <property type="match status" value="1"/>
</dbReference>